<proteinExistence type="evidence at transcript level"/>
<gene>
    <name type="primary">Capn9</name>
    <name type="synonym">Ncl4</name>
</gene>
<keyword id="KW-0106">Calcium</keyword>
<keyword id="KW-0378">Hydrolase</keyword>
<keyword id="KW-0479">Metal-binding</keyword>
<keyword id="KW-0645">Protease</keyword>
<keyword id="KW-1185">Reference proteome</keyword>
<keyword id="KW-0677">Repeat</keyword>
<keyword id="KW-0788">Thiol protease</keyword>
<reference key="1">
    <citation type="journal article" date="2004" name="Nature">
        <title>Genome sequence of the Brown Norway rat yields insights into mammalian evolution.</title>
        <authorList>
            <person name="Gibbs R.A."/>
            <person name="Weinstock G.M."/>
            <person name="Metzker M.L."/>
            <person name="Muzny D.M."/>
            <person name="Sodergren E.J."/>
            <person name="Scherer S."/>
            <person name="Scott G."/>
            <person name="Steffen D."/>
            <person name="Worley K.C."/>
            <person name="Burch P.E."/>
            <person name="Okwuonu G."/>
            <person name="Hines S."/>
            <person name="Lewis L."/>
            <person name="Deramo C."/>
            <person name="Delgado O."/>
            <person name="Dugan-Rocha S."/>
            <person name="Miner G."/>
            <person name="Morgan M."/>
            <person name="Hawes A."/>
            <person name="Gill R."/>
            <person name="Holt R.A."/>
            <person name="Adams M.D."/>
            <person name="Amanatides P.G."/>
            <person name="Baden-Tillson H."/>
            <person name="Barnstead M."/>
            <person name="Chin S."/>
            <person name="Evans C.A."/>
            <person name="Ferriera S."/>
            <person name="Fosler C."/>
            <person name="Glodek A."/>
            <person name="Gu Z."/>
            <person name="Jennings D."/>
            <person name="Kraft C.L."/>
            <person name="Nguyen T."/>
            <person name="Pfannkoch C.M."/>
            <person name="Sitter C."/>
            <person name="Sutton G.G."/>
            <person name="Venter J.C."/>
            <person name="Woodage T."/>
            <person name="Smith D."/>
            <person name="Lee H.-M."/>
            <person name="Gustafson E."/>
            <person name="Cahill P."/>
            <person name="Kana A."/>
            <person name="Doucette-Stamm L."/>
            <person name="Weinstock K."/>
            <person name="Fechtel K."/>
            <person name="Weiss R.B."/>
            <person name="Dunn D.M."/>
            <person name="Green E.D."/>
            <person name="Blakesley R.W."/>
            <person name="Bouffard G.G."/>
            <person name="De Jong P.J."/>
            <person name="Osoegawa K."/>
            <person name="Zhu B."/>
            <person name="Marra M."/>
            <person name="Schein J."/>
            <person name="Bosdet I."/>
            <person name="Fjell C."/>
            <person name="Jones S."/>
            <person name="Krzywinski M."/>
            <person name="Mathewson C."/>
            <person name="Siddiqui A."/>
            <person name="Wye N."/>
            <person name="McPherson J."/>
            <person name="Zhao S."/>
            <person name="Fraser C.M."/>
            <person name="Shetty J."/>
            <person name="Shatsman S."/>
            <person name="Geer K."/>
            <person name="Chen Y."/>
            <person name="Abramzon S."/>
            <person name="Nierman W.C."/>
            <person name="Havlak P.H."/>
            <person name="Chen R."/>
            <person name="Durbin K.J."/>
            <person name="Egan A."/>
            <person name="Ren Y."/>
            <person name="Song X.-Z."/>
            <person name="Li B."/>
            <person name="Liu Y."/>
            <person name="Qin X."/>
            <person name="Cawley S."/>
            <person name="Cooney A.J."/>
            <person name="D'Souza L.M."/>
            <person name="Martin K."/>
            <person name="Wu J.Q."/>
            <person name="Gonzalez-Garay M.L."/>
            <person name="Jackson A.R."/>
            <person name="Kalafus K.J."/>
            <person name="McLeod M.P."/>
            <person name="Milosavljevic A."/>
            <person name="Virk D."/>
            <person name="Volkov A."/>
            <person name="Wheeler D.A."/>
            <person name="Zhang Z."/>
            <person name="Bailey J.A."/>
            <person name="Eichler E.E."/>
            <person name="Tuzun E."/>
            <person name="Birney E."/>
            <person name="Mongin E."/>
            <person name="Ureta-Vidal A."/>
            <person name="Woodwark C."/>
            <person name="Zdobnov E."/>
            <person name="Bork P."/>
            <person name="Suyama M."/>
            <person name="Torrents D."/>
            <person name="Alexandersson M."/>
            <person name="Trask B.J."/>
            <person name="Young J.M."/>
            <person name="Huang H."/>
            <person name="Wang H."/>
            <person name="Xing H."/>
            <person name="Daniels S."/>
            <person name="Gietzen D."/>
            <person name="Schmidt J."/>
            <person name="Stevens K."/>
            <person name="Vitt U."/>
            <person name="Wingrove J."/>
            <person name="Camara F."/>
            <person name="Mar Alba M."/>
            <person name="Abril J.F."/>
            <person name="Guigo R."/>
            <person name="Smit A."/>
            <person name="Dubchak I."/>
            <person name="Rubin E.M."/>
            <person name="Couronne O."/>
            <person name="Poliakov A."/>
            <person name="Huebner N."/>
            <person name="Ganten D."/>
            <person name="Goesele C."/>
            <person name="Hummel O."/>
            <person name="Kreitler T."/>
            <person name="Lee Y.-A."/>
            <person name="Monti J."/>
            <person name="Schulz H."/>
            <person name="Zimdahl H."/>
            <person name="Himmelbauer H."/>
            <person name="Lehrach H."/>
            <person name="Jacob H.J."/>
            <person name="Bromberg S."/>
            <person name="Gullings-Handley J."/>
            <person name="Jensen-Seaman M.I."/>
            <person name="Kwitek A.E."/>
            <person name="Lazar J."/>
            <person name="Pasko D."/>
            <person name="Tonellato P.J."/>
            <person name="Twigger S."/>
            <person name="Ponting C.P."/>
            <person name="Duarte J.M."/>
            <person name="Rice S."/>
            <person name="Goodstadt L."/>
            <person name="Beatson S.A."/>
            <person name="Emes R.D."/>
            <person name="Winter E.E."/>
            <person name="Webber C."/>
            <person name="Brandt P."/>
            <person name="Nyakatura G."/>
            <person name="Adetobi M."/>
            <person name="Chiaromonte F."/>
            <person name="Elnitski L."/>
            <person name="Eswara P."/>
            <person name="Hardison R.C."/>
            <person name="Hou M."/>
            <person name="Kolbe D."/>
            <person name="Makova K."/>
            <person name="Miller W."/>
            <person name="Nekrutenko A."/>
            <person name="Riemer C."/>
            <person name="Schwartz S."/>
            <person name="Taylor J."/>
            <person name="Yang S."/>
            <person name="Zhang Y."/>
            <person name="Lindpaintner K."/>
            <person name="Andrews T.D."/>
            <person name="Caccamo M."/>
            <person name="Clamp M."/>
            <person name="Clarke L."/>
            <person name="Curwen V."/>
            <person name="Durbin R.M."/>
            <person name="Eyras E."/>
            <person name="Searle S.M."/>
            <person name="Cooper G.M."/>
            <person name="Batzoglou S."/>
            <person name="Brudno M."/>
            <person name="Sidow A."/>
            <person name="Stone E.A."/>
            <person name="Payseur B.A."/>
            <person name="Bourque G."/>
            <person name="Lopez-Otin C."/>
            <person name="Puente X.S."/>
            <person name="Chakrabarti K."/>
            <person name="Chatterji S."/>
            <person name="Dewey C."/>
            <person name="Pachter L."/>
            <person name="Bray N."/>
            <person name="Yap V.B."/>
            <person name="Caspi A."/>
            <person name="Tesler G."/>
            <person name="Pevzner P.A."/>
            <person name="Haussler D."/>
            <person name="Roskin K.M."/>
            <person name="Baertsch R."/>
            <person name="Clawson H."/>
            <person name="Furey T.S."/>
            <person name="Hinrichs A.S."/>
            <person name="Karolchik D."/>
            <person name="Kent W.J."/>
            <person name="Rosenbloom K.R."/>
            <person name="Trumbower H."/>
            <person name="Weirauch M."/>
            <person name="Cooper D.N."/>
            <person name="Stenson P.D."/>
            <person name="Ma B."/>
            <person name="Brent M."/>
            <person name="Arumugam M."/>
            <person name="Shteynberg D."/>
            <person name="Copley R.R."/>
            <person name="Taylor M.S."/>
            <person name="Riethman H."/>
            <person name="Mudunuri U."/>
            <person name="Peterson J."/>
            <person name="Guyer M."/>
            <person name="Felsenfeld A."/>
            <person name="Old S."/>
            <person name="Mockrin S."/>
            <person name="Collins F.S."/>
        </authorList>
    </citation>
    <scope>NUCLEOTIDE SEQUENCE [LARGE SCALE GENOMIC DNA]</scope>
    <source>
        <strain>Brown Norway</strain>
    </source>
</reference>
<reference key="2">
    <citation type="journal article" date="1998" name="Biol. Chem.">
        <title>Molecular cloning and characterization of a novel tissue-specific calpain predominantly expressed in the digestive tract.</title>
        <authorList>
            <person name="Lee H.-J."/>
            <person name="Sorimachi H."/>
            <person name="Jeong S.-Y."/>
            <person name="Ishiura S."/>
            <person name="Suzuki K."/>
        </authorList>
    </citation>
    <scope>NUCLEOTIDE SEQUENCE [MRNA] OF 19-690</scope>
</reference>
<organism>
    <name type="scientific">Rattus norvegicus</name>
    <name type="common">Rat</name>
    <dbReference type="NCBI Taxonomy" id="10116"/>
    <lineage>
        <taxon>Eukaryota</taxon>
        <taxon>Metazoa</taxon>
        <taxon>Chordata</taxon>
        <taxon>Craniata</taxon>
        <taxon>Vertebrata</taxon>
        <taxon>Euteleostomi</taxon>
        <taxon>Mammalia</taxon>
        <taxon>Eutheria</taxon>
        <taxon>Euarchontoglires</taxon>
        <taxon>Glires</taxon>
        <taxon>Rodentia</taxon>
        <taxon>Myomorpha</taxon>
        <taxon>Muroidea</taxon>
        <taxon>Muridae</taxon>
        <taxon>Murinae</taxon>
        <taxon>Rattus</taxon>
    </lineage>
</organism>
<dbReference type="EC" id="3.4.22.-"/>
<dbReference type="EMBL" id="U89514">
    <property type="protein sequence ID" value="AAB69115.1"/>
    <property type="molecule type" value="mRNA"/>
</dbReference>
<dbReference type="RefSeq" id="NP_001258069.1">
    <property type="nucleotide sequence ID" value="NM_001271140.1"/>
</dbReference>
<dbReference type="SMR" id="O35920"/>
<dbReference type="FunCoup" id="O35920">
    <property type="interactions" value="20"/>
</dbReference>
<dbReference type="STRING" id="10116.ENSRNOP00000025357"/>
<dbReference type="MEROPS" id="C02.006"/>
<dbReference type="GlyGen" id="O35920">
    <property type="glycosylation" value="1 site"/>
</dbReference>
<dbReference type="PhosphoSitePlus" id="O35920"/>
<dbReference type="PaxDb" id="10116-ENSRNOP00000025357"/>
<dbReference type="Ensembl" id="ENSRNOT00000025357.8">
    <property type="protein sequence ID" value="ENSRNOP00000025357.7"/>
    <property type="gene ID" value="ENSRNOG00000018480.8"/>
</dbReference>
<dbReference type="GeneID" id="116694"/>
<dbReference type="KEGG" id="rno:116694"/>
<dbReference type="UCSC" id="RGD:70965">
    <property type="organism name" value="rat"/>
</dbReference>
<dbReference type="AGR" id="RGD:70965"/>
<dbReference type="CTD" id="10753"/>
<dbReference type="RGD" id="70965">
    <property type="gene designation" value="Capn9"/>
</dbReference>
<dbReference type="eggNOG" id="KOG0045">
    <property type="taxonomic scope" value="Eukaryota"/>
</dbReference>
<dbReference type="GeneTree" id="ENSGT00940000158966"/>
<dbReference type="HOGENOM" id="CLU_010982_0_3_1"/>
<dbReference type="InParanoid" id="O35920"/>
<dbReference type="OMA" id="FRVFWNK"/>
<dbReference type="OrthoDB" id="37566at9989"/>
<dbReference type="BRENDA" id="3.4.22.B29">
    <property type="organism ID" value="5301"/>
</dbReference>
<dbReference type="Reactome" id="R-RNO-1474228">
    <property type="pathway name" value="Degradation of the extracellular matrix"/>
</dbReference>
<dbReference type="PRO" id="PR:O35920"/>
<dbReference type="Proteomes" id="UP000002494">
    <property type="component" value="Chromosome 19"/>
</dbReference>
<dbReference type="Bgee" id="ENSRNOG00000018480">
    <property type="expression patterns" value="Expressed in stomach and 4 other cell types or tissues"/>
</dbReference>
<dbReference type="GO" id="GO:0005737">
    <property type="term" value="C:cytoplasm"/>
    <property type="evidence" value="ECO:0000318"/>
    <property type="project" value="GO_Central"/>
</dbReference>
<dbReference type="GO" id="GO:0005509">
    <property type="term" value="F:calcium ion binding"/>
    <property type="evidence" value="ECO:0000304"/>
    <property type="project" value="RGD"/>
</dbReference>
<dbReference type="GO" id="GO:0004198">
    <property type="term" value="F:calcium-dependent cysteine-type endopeptidase activity"/>
    <property type="evidence" value="ECO:0000318"/>
    <property type="project" value="GO_Central"/>
</dbReference>
<dbReference type="GO" id="GO:0006508">
    <property type="term" value="P:proteolysis"/>
    <property type="evidence" value="ECO:0000318"/>
    <property type="project" value="GO_Central"/>
</dbReference>
<dbReference type="CDD" id="cd00214">
    <property type="entry name" value="Calpain_III"/>
    <property type="match status" value="1"/>
</dbReference>
<dbReference type="CDD" id="cd00044">
    <property type="entry name" value="CysPc"/>
    <property type="match status" value="1"/>
</dbReference>
<dbReference type="FunFam" id="1.10.238.10:FF:000151">
    <property type="entry name" value="Calpain 9"/>
    <property type="match status" value="1"/>
</dbReference>
<dbReference type="FunFam" id="2.60.120.380:FF:000001">
    <property type="entry name" value="Calpain-1 catalytic subunit"/>
    <property type="match status" value="1"/>
</dbReference>
<dbReference type="FunFam" id="3.90.70.10:FF:000001">
    <property type="entry name" value="Calpain-1 catalytic subunit"/>
    <property type="match status" value="1"/>
</dbReference>
<dbReference type="Gene3D" id="2.60.120.380">
    <property type="match status" value="1"/>
</dbReference>
<dbReference type="Gene3D" id="3.90.70.10">
    <property type="entry name" value="Cysteine proteinases"/>
    <property type="match status" value="1"/>
</dbReference>
<dbReference type="Gene3D" id="1.10.238.10">
    <property type="entry name" value="EF-hand"/>
    <property type="match status" value="1"/>
</dbReference>
<dbReference type="InterPro" id="IPR033883">
    <property type="entry name" value="C2_III"/>
</dbReference>
<dbReference type="InterPro" id="IPR022684">
    <property type="entry name" value="Calpain_cysteine_protease"/>
</dbReference>
<dbReference type="InterPro" id="IPR022682">
    <property type="entry name" value="Calpain_domain_III"/>
</dbReference>
<dbReference type="InterPro" id="IPR022683">
    <property type="entry name" value="Calpain_III"/>
</dbReference>
<dbReference type="InterPro" id="IPR036213">
    <property type="entry name" value="Calpain_III_sf"/>
</dbReference>
<dbReference type="InterPro" id="IPR011992">
    <property type="entry name" value="EF-hand-dom_pair"/>
</dbReference>
<dbReference type="InterPro" id="IPR018247">
    <property type="entry name" value="EF_Hand_1_Ca_BS"/>
</dbReference>
<dbReference type="InterPro" id="IPR002048">
    <property type="entry name" value="EF_hand_dom"/>
</dbReference>
<dbReference type="InterPro" id="IPR038765">
    <property type="entry name" value="Papain-like_cys_pep_sf"/>
</dbReference>
<dbReference type="InterPro" id="IPR000169">
    <property type="entry name" value="Pept_cys_AS"/>
</dbReference>
<dbReference type="InterPro" id="IPR001300">
    <property type="entry name" value="Peptidase_C2_calpain_cat"/>
</dbReference>
<dbReference type="PANTHER" id="PTHR10183">
    <property type="entry name" value="CALPAIN"/>
    <property type="match status" value="1"/>
</dbReference>
<dbReference type="PANTHER" id="PTHR10183:SF385">
    <property type="entry name" value="CALPAIN-9"/>
    <property type="match status" value="1"/>
</dbReference>
<dbReference type="Pfam" id="PF01067">
    <property type="entry name" value="Calpain_III"/>
    <property type="match status" value="1"/>
</dbReference>
<dbReference type="Pfam" id="PF00648">
    <property type="entry name" value="Peptidase_C2"/>
    <property type="match status" value="1"/>
</dbReference>
<dbReference type="PRINTS" id="PR00704">
    <property type="entry name" value="CALPAIN"/>
</dbReference>
<dbReference type="SMART" id="SM00720">
    <property type="entry name" value="calpain_III"/>
    <property type="match status" value="1"/>
</dbReference>
<dbReference type="SMART" id="SM00230">
    <property type="entry name" value="CysPc"/>
    <property type="match status" value="1"/>
</dbReference>
<dbReference type="SMART" id="SM00054">
    <property type="entry name" value="EFh"/>
    <property type="match status" value="2"/>
</dbReference>
<dbReference type="SUPFAM" id="SSF49758">
    <property type="entry name" value="Calpain large subunit, middle domain (domain III)"/>
    <property type="match status" value="1"/>
</dbReference>
<dbReference type="SUPFAM" id="SSF54001">
    <property type="entry name" value="Cysteine proteinases"/>
    <property type="match status" value="1"/>
</dbReference>
<dbReference type="SUPFAM" id="SSF47473">
    <property type="entry name" value="EF-hand"/>
    <property type="match status" value="1"/>
</dbReference>
<dbReference type="PROSITE" id="PS50203">
    <property type="entry name" value="CALPAIN_CAT"/>
    <property type="match status" value="1"/>
</dbReference>
<dbReference type="PROSITE" id="PS00018">
    <property type="entry name" value="EF_HAND_1"/>
    <property type="match status" value="2"/>
</dbReference>
<dbReference type="PROSITE" id="PS50222">
    <property type="entry name" value="EF_HAND_2"/>
    <property type="match status" value="3"/>
</dbReference>
<dbReference type="PROSITE" id="PS00139">
    <property type="entry name" value="THIOL_PROTEASE_CYS"/>
    <property type="match status" value="1"/>
</dbReference>
<evidence type="ECO:0000250" key="1"/>
<evidence type="ECO:0000255" key="2">
    <source>
        <dbReference type="PROSITE-ProRule" id="PRU00239"/>
    </source>
</evidence>
<evidence type="ECO:0000255" key="3">
    <source>
        <dbReference type="PROSITE-ProRule" id="PRU00448"/>
    </source>
</evidence>
<evidence type="ECO:0000256" key="4">
    <source>
        <dbReference type="SAM" id="MobiDB-lite"/>
    </source>
</evidence>
<evidence type="ECO:0000305" key="5"/>
<protein>
    <recommendedName>
        <fullName>Calpain-9</fullName>
        <ecNumber>3.4.22.-</ecNumber>
    </recommendedName>
    <alternativeName>
        <fullName>Digestive tract-specific calpain</fullName>
    </alternativeName>
    <alternativeName>
        <fullName>New calpain 4</fullName>
        <shortName>nCL-4</shortName>
    </alternativeName>
</protein>
<sequence>MPYLHRSLRPQPQPVPRDARTVHSSGHSFEQLRQSCLQSGTLFEDADFPASNSSLFYSERPQVPFVWKRPGEIVENPEFILGGATRTDICQGELGDCWLLAAIASLTLNQKALARVVPQDQGFGSGYAGIFHFQFWQHSEWLDVVIDDRLPTFRDRLVFLHSADHNEFWSALLEKAYAKLNGSYEALKGGSAIEAMEDFTGGVAENFQIREAPEDFYEILEKALRRGSLLGCSIDTLNASESEARTPLGLIKGHAYTVTGLDQVNFHGQRIKLIRVRNPWGQVEWNGPWSDSSPEWRSMSLEEQKRLGHTALDDGEFWMAFEDFKTHFDKVEICNLTPDALEDNTLHKWEVTIHQGSWVRGSTAGGCRNFLDTFWTNPQIKLSLTERDEGQEGCTFLAALMQKDRRRLKRFGANMLTIGYAIYQCPDKDGHLNRDFFRYHASLARSKTFINLREVSGRFQLPPGDYILIPSTFEPHQEADFCLRIFSEKKAVTQDLDENIDIDLPELPKPTPQEEETEEERQFRALFRRIAGEDMEVSAEELEYVLNAVLQKKTALKFKRLSLLSCRNIISLMDTSGNGKMEFEEFRVFWDKLRYWMDLFLQFDVDKSGTMSSYELRTALKAAGFQLGSHLLQLIVLRYADENLQLDFDDYLNCLVRLENASRVFQCLSVKNKDFIHLNINEFINLTMNI</sequence>
<accession>O35920</accession>
<accession>F1LR50</accession>
<comment type="function">
    <text evidence="1">Calcium-regulated non-lysosomal thiol-protease.</text>
</comment>
<comment type="tissue specificity">
    <text>Predominantly expressed in stomach and small intestine, although low levels of expression in other organs.</text>
</comment>
<comment type="similarity">
    <text evidence="5">Belongs to the peptidase C2 family.</text>
</comment>
<name>CAN9_RAT</name>
<feature type="chain" id="PRO_0000207724" description="Calpain-9">
    <location>
        <begin position="1"/>
        <end position="690"/>
    </location>
</feature>
<feature type="domain" description="Calpain catalytic" evidence="2">
    <location>
        <begin position="42"/>
        <end position="337"/>
    </location>
</feature>
<feature type="domain" description="EF-hand 1" evidence="3">
    <location>
        <begin position="534"/>
        <end position="552"/>
    </location>
</feature>
<feature type="domain" description="EF-hand 2" evidence="3">
    <location>
        <begin position="561"/>
        <end position="589"/>
    </location>
</feature>
<feature type="domain" description="EF-hand 3" evidence="3">
    <location>
        <begin position="591"/>
        <end position="626"/>
    </location>
</feature>
<feature type="region of interest" description="Disordered" evidence="4">
    <location>
        <begin position="1"/>
        <end position="24"/>
    </location>
</feature>
<feature type="region of interest" description="Domain III">
    <location>
        <begin position="338"/>
        <end position="521"/>
    </location>
</feature>
<feature type="region of interest" description="Domain IV">
    <location>
        <begin position="522"/>
        <end position="690"/>
    </location>
</feature>
<feature type="active site" evidence="1">
    <location>
        <position position="97"/>
    </location>
</feature>
<feature type="active site" evidence="1">
    <location>
        <position position="254"/>
    </location>
</feature>
<feature type="active site" evidence="1">
    <location>
        <position position="278"/>
    </location>
</feature>
<feature type="binding site" evidence="1">
    <location>
        <position position="81"/>
    </location>
    <ligand>
        <name>Ca(2+)</name>
        <dbReference type="ChEBI" id="CHEBI:29108"/>
        <label>1</label>
    </ligand>
</feature>
<feature type="binding site" evidence="1">
    <location>
        <position position="83"/>
    </location>
    <ligand>
        <name>Ca(2+)</name>
        <dbReference type="ChEBI" id="CHEBI:29108"/>
        <label>1</label>
    </ligand>
</feature>
<feature type="binding site" evidence="1">
    <location>
        <position position="88"/>
    </location>
    <ligand>
        <name>Ca(2+)</name>
        <dbReference type="ChEBI" id="CHEBI:29108"/>
        <label>1</label>
    </ligand>
</feature>
<feature type="binding site" evidence="1">
    <location>
        <position position="167"/>
    </location>
    <ligand>
        <name>Ca(2+)</name>
        <dbReference type="ChEBI" id="CHEBI:29108"/>
        <label>1</label>
    </ligand>
</feature>
<feature type="binding site" evidence="1">
    <location>
        <position position="284"/>
    </location>
    <ligand>
        <name>Ca(2+)</name>
        <dbReference type="ChEBI" id="CHEBI:29108"/>
        <label>2</label>
    </ligand>
</feature>
<feature type="binding site" evidence="1">
    <location>
        <position position="291"/>
    </location>
    <ligand>
        <name>Ca(2+)</name>
        <dbReference type="ChEBI" id="CHEBI:29108"/>
        <label>2</label>
    </ligand>
</feature>
<feature type="binding site">
    <location>
        <position position="312"/>
    </location>
    <ligand>
        <name>Ca(2+)</name>
        <dbReference type="ChEBI" id="CHEBI:29108"/>
        <label>2</label>
    </ligand>
</feature>
<feature type="binding site" evidence="1">
    <location>
        <position position="314"/>
    </location>
    <ligand>
        <name>Ca(2+)</name>
        <dbReference type="ChEBI" id="CHEBI:29108"/>
        <label>2</label>
    </ligand>
</feature>
<feature type="binding site" evidence="1">
    <location>
        <position position="316"/>
    </location>
    <ligand>
        <name>Ca(2+)</name>
        <dbReference type="ChEBI" id="CHEBI:29108"/>
        <label>2</label>
    </ligand>
</feature>
<feature type="binding site" evidence="3">
    <location>
        <position position="574"/>
    </location>
    <ligand>
        <name>Ca(2+)</name>
        <dbReference type="ChEBI" id="CHEBI:29108"/>
        <label>3</label>
    </ligand>
</feature>
<feature type="binding site" evidence="3">
    <location>
        <position position="576"/>
    </location>
    <ligand>
        <name>Ca(2+)</name>
        <dbReference type="ChEBI" id="CHEBI:29108"/>
        <label>3</label>
    </ligand>
</feature>
<feature type="binding site" evidence="3">
    <location>
        <position position="578"/>
    </location>
    <ligand>
        <name>Ca(2+)</name>
        <dbReference type="ChEBI" id="CHEBI:29108"/>
        <label>3</label>
    </ligand>
</feature>
<feature type="binding site" evidence="3">
    <location>
        <position position="580"/>
    </location>
    <ligand>
        <name>Ca(2+)</name>
        <dbReference type="ChEBI" id="CHEBI:29108"/>
        <label>3</label>
    </ligand>
</feature>
<feature type="binding site" evidence="3">
    <location>
        <position position="585"/>
    </location>
    <ligand>
        <name>Ca(2+)</name>
        <dbReference type="ChEBI" id="CHEBI:29108"/>
        <label>3</label>
    </ligand>
</feature>
<feature type="binding site" evidence="3">
    <location>
        <position position="604"/>
    </location>
    <ligand>
        <name>Ca(2+)</name>
        <dbReference type="ChEBI" id="CHEBI:29108"/>
        <label>4</label>
    </ligand>
</feature>
<feature type="binding site" evidence="3">
    <location>
        <position position="606"/>
    </location>
    <ligand>
        <name>Ca(2+)</name>
        <dbReference type="ChEBI" id="CHEBI:29108"/>
        <label>4</label>
    </ligand>
</feature>
<feature type="binding site" evidence="3">
    <location>
        <position position="608"/>
    </location>
    <ligand>
        <name>Ca(2+)</name>
        <dbReference type="ChEBI" id="CHEBI:29108"/>
        <label>4</label>
    </ligand>
</feature>
<feature type="binding site" evidence="3">
    <location>
        <position position="610"/>
    </location>
    <ligand>
        <name>Ca(2+)</name>
        <dbReference type="ChEBI" id="CHEBI:29108"/>
        <label>4</label>
    </ligand>
</feature>
<feature type="binding site" evidence="3">
    <location>
        <position position="615"/>
    </location>
    <ligand>
        <name>Ca(2+)</name>
        <dbReference type="ChEBI" id="CHEBI:29108"/>
        <label>4</label>
    </ligand>
</feature>
<feature type="sequence conflict" description="In Ref. 2; AAB69115." evidence="5" ref="2">
    <original>M</original>
    <variation>V</variation>
    <location>
        <position position="299"/>
    </location>
</feature>
<feature type="sequence conflict" description="In Ref. 2; AAB69115." evidence="5" ref="2">
    <original>K</original>
    <variation>KRL</variation>
    <location>
        <position position="559"/>
    </location>
</feature>